<protein>
    <recommendedName>
        <fullName evidence="3">(+)-O-methylkolavelool synthase</fullName>
        <ecNumber evidence="2">2.1.1.347</ecNumber>
    </recommendedName>
    <alternativeName>
        <fullName evidence="5">S-adenosyl-L-methionine:(+)-kolavelool O-methyltransferase</fullName>
    </alternativeName>
</protein>
<gene>
    <name evidence="6" type="ordered locus">Haur_2147</name>
</gene>
<evidence type="ECO:0000250" key="1">
    <source>
        <dbReference type="UniProtKB" id="Q8KZ94"/>
    </source>
</evidence>
<evidence type="ECO:0000269" key="2">
    <source>
    </source>
</evidence>
<evidence type="ECO:0000303" key="3">
    <source>
    </source>
</evidence>
<evidence type="ECO:0000305" key="4"/>
<evidence type="ECO:0000305" key="5">
    <source>
    </source>
</evidence>
<evidence type="ECO:0000312" key="6">
    <source>
        <dbReference type="EMBL" id="ABX04787.1"/>
    </source>
</evidence>
<comment type="function">
    <text evidence="2">Involved in the biosynthesis of the diterpene (+)-O-methylkolavelool (PubMed:25694050). Catalyzes the transfer of a methyl group from S-adenosyl-L-methionine to the hydroxy group of (+)-kolavelool, forming (+)-O-methylkolavelool (PubMed:25694050).</text>
</comment>
<comment type="catalytic activity">
    <reaction evidence="2">
        <text>(+)-kolavelool + S-adenosyl-L-methionine = (+)-O-methylkolavelool + S-adenosyl-L-homocysteine + H(+)</text>
        <dbReference type="Rhea" id="RHEA:55968"/>
        <dbReference type="ChEBI" id="CHEBI:15378"/>
        <dbReference type="ChEBI" id="CHEBI:57856"/>
        <dbReference type="ChEBI" id="CHEBI:59789"/>
        <dbReference type="ChEBI" id="CHEBI:138313"/>
        <dbReference type="ChEBI" id="CHEBI:139480"/>
        <dbReference type="EC" id="2.1.1.347"/>
    </reaction>
    <physiologicalReaction direction="left-to-right" evidence="2">
        <dbReference type="Rhea" id="RHEA:55969"/>
    </physiologicalReaction>
</comment>
<comment type="similarity">
    <text evidence="4">Belongs to the methyltransferase superfamily.</text>
</comment>
<sequence>MTVLSTDIPAPNSPSISDVEAYYDAMGPFYKLIWGDSVHGGYWPAGLEDMSLPEAQEHLTNLMIEKTPIKPGQHMLDLGCGTGLPAIRMASAKQCHVHGLTVAHGQVAEAQATIQAMQMQELVHINWGNAMELPFEADFFNAAWAFESIFHMPSRLTVLQEANRVLQAGSYFVLTDIVEVKSLSPEQQQIFFPAFQINTLTTKQGYLDLFAQTGFEQLELIDLTAGIEKTLAHTKLGIEQKRAELAAIYPPEMLGMIEQTWPMVEKIYAEFVRYVLIVARKRG</sequence>
<keyword id="KW-0489">Methyltransferase</keyword>
<keyword id="KW-0949">S-adenosyl-L-methionine</keyword>
<keyword id="KW-0808">Transferase</keyword>
<dbReference type="EC" id="2.1.1.347" evidence="2"/>
<dbReference type="EMBL" id="CP000875">
    <property type="protein sequence ID" value="ABX04787.1"/>
    <property type="molecule type" value="Genomic_DNA"/>
</dbReference>
<dbReference type="SMR" id="A9AWD7"/>
<dbReference type="STRING" id="316274.Haur_2147"/>
<dbReference type="KEGG" id="hau:Haur_2147"/>
<dbReference type="eggNOG" id="COG2230">
    <property type="taxonomic scope" value="Bacteria"/>
</dbReference>
<dbReference type="HOGENOM" id="CLU_039068_6_0_0"/>
<dbReference type="InParanoid" id="A9AWD7"/>
<dbReference type="BioCyc" id="HAUR316274:GHYA-2175-MONOMER"/>
<dbReference type="BRENDA" id="2.1.1.347">
    <property type="organism ID" value="2656"/>
</dbReference>
<dbReference type="Proteomes" id="UP000000787">
    <property type="component" value="Chromosome"/>
</dbReference>
<dbReference type="GO" id="GO:0008168">
    <property type="term" value="F:methyltransferase activity"/>
    <property type="evidence" value="ECO:0007669"/>
    <property type="project" value="UniProtKB-KW"/>
</dbReference>
<dbReference type="GO" id="GO:0032259">
    <property type="term" value="P:methylation"/>
    <property type="evidence" value="ECO:0007669"/>
    <property type="project" value="UniProtKB-KW"/>
</dbReference>
<dbReference type="CDD" id="cd02440">
    <property type="entry name" value="AdoMet_MTases"/>
    <property type="match status" value="1"/>
</dbReference>
<dbReference type="Gene3D" id="3.40.50.150">
    <property type="entry name" value="Vaccinia Virus protein VP39"/>
    <property type="match status" value="1"/>
</dbReference>
<dbReference type="InterPro" id="IPR050447">
    <property type="entry name" value="Erg6_SMT_methyltransf"/>
</dbReference>
<dbReference type="InterPro" id="IPR029063">
    <property type="entry name" value="SAM-dependent_MTases_sf"/>
</dbReference>
<dbReference type="PANTHER" id="PTHR44068:SF11">
    <property type="entry name" value="GERANYL DIPHOSPHATE 2-C-METHYLTRANSFERASE"/>
    <property type="match status" value="1"/>
</dbReference>
<dbReference type="PANTHER" id="PTHR44068">
    <property type="entry name" value="ZGC:194242"/>
    <property type="match status" value="1"/>
</dbReference>
<dbReference type="Pfam" id="PF02353">
    <property type="entry name" value="CMAS"/>
    <property type="match status" value="1"/>
</dbReference>
<dbReference type="SUPFAM" id="SSF53335">
    <property type="entry name" value="S-adenosyl-L-methionine-dependent methyltransferases"/>
    <property type="match status" value="1"/>
</dbReference>
<organism>
    <name type="scientific">Herpetosiphon aurantiacus (strain ATCC 23779 / DSM 785 / 114-95)</name>
    <dbReference type="NCBI Taxonomy" id="316274"/>
    <lineage>
        <taxon>Bacteria</taxon>
        <taxon>Bacillati</taxon>
        <taxon>Chloroflexota</taxon>
        <taxon>Chloroflexia</taxon>
        <taxon>Herpetosiphonales</taxon>
        <taxon>Herpetosiphonaceae</taxon>
        <taxon>Herpetosiphon</taxon>
    </lineage>
</organism>
<name>MEKOS_HERA2</name>
<feature type="chain" id="PRO_0000443954" description="(+)-O-methylkolavelool synthase">
    <location>
        <begin position="1"/>
        <end position="283"/>
    </location>
</feature>
<feature type="binding site" evidence="1">
    <location>
        <position position="106"/>
    </location>
    <ligand>
        <name>S-adenosyl-L-methionine</name>
        <dbReference type="ChEBI" id="CHEBI:59789"/>
    </ligand>
</feature>
<feature type="binding site" evidence="1">
    <location>
        <begin position="129"/>
        <end position="130"/>
    </location>
    <ligand>
        <name>S-adenosyl-L-methionine</name>
        <dbReference type="ChEBI" id="CHEBI:59789"/>
    </ligand>
</feature>
<feature type="binding site" evidence="1">
    <location>
        <position position="151"/>
    </location>
    <ligand>
        <name>S-adenosyl-L-methionine</name>
        <dbReference type="ChEBI" id="CHEBI:59789"/>
    </ligand>
</feature>
<accession>A9AWD7</accession>
<reference key="1">
    <citation type="journal article" date="2011" name="Stand. Genomic Sci.">
        <title>Complete genome sequence of the filamentous gliding predatory bacterium Herpetosiphon aurantiacus type strain (114-95(T)).</title>
        <authorList>
            <person name="Kiss H."/>
            <person name="Nett M."/>
            <person name="Domin N."/>
            <person name="Martin K."/>
            <person name="Maresca J.A."/>
            <person name="Copeland A."/>
            <person name="Lapidus A."/>
            <person name="Lucas S."/>
            <person name="Berry K.W."/>
            <person name="Glavina Del Rio T."/>
            <person name="Dalin E."/>
            <person name="Tice H."/>
            <person name="Pitluck S."/>
            <person name="Richardson P."/>
            <person name="Bruce D."/>
            <person name="Goodwin L."/>
            <person name="Han C."/>
            <person name="Detter J.C."/>
            <person name="Schmutz J."/>
            <person name="Brettin T."/>
            <person name="Land M."/>
            <person name="Hauser L."/>
            <person name="Kyrpides N.C."/>
            <person name="Ivanova N."/>
            <person name="Goeker M."/>
            <person name="Woyke T."/>
            <person name="Klenk H.P."/>
            <person name="Bryant D.A."/>
        </authorList>
    </citation>
    <scope>NUCLEOTIDE SEQUENCE [LARGE SCALE GENOMIC DNA]</scope>
    <source>
        <strain>ATCC 23779 / DSM 785 / 114-95</strain>
    </source>
</reference>
<reference key="2">
    <citation type="journal article" date="2015" name="ChemBioChem">
        <title>Identification of a new diterpene biosynthetic gene cluster that produces O-methylkolavelool in Herpetosiphon aurantiacus.</title>
        <authorList>
            <person name="Nakano C."/>
            <person name="Oshima M."/>
            <person name="Kurashima N."/>
            <person name="Hoshino T."/>
        </authorList>
    </citation>
    <scope>FUNCTION</scope>
    <scope>CATALYTIC ACTIVITY</scope>
    <source>
        <strain>ATCC 23779 / DSM 785 / 114-95</strain>
    </source>
</reference>
<proteinExistence type="evidence at protein level"/>